<keyword id="KW-0046">Antibiotic resistance</keyword>
<keyword id="KW-0997">Cell inner membrane</keyword>
<keyword id="KW-1003">Cell membrane</keyword>
<keyword id="KW-0133">Cell shape</keyword>
<keyword id="KW-0961">Cell wall biogenesis/degradation</keyword>
<keyword id="KW-0378">Hydrolase</keyword>
<keyword id="KW-0472">Membrane</keyword>
<keyword id="KW-0573">Peptidoglycan synthesis</keyword>
<keyword id="KW-1185">Reference proteome</keyword>
<keyword id="KW-0812">Transmembrane</keyword>
<keyword id="KW-1133">Transmembrane helix</keyword>
<name>UPPP_CITK8</name>
<accession>A8APU0</accession>
<evidence type="ECO:0000255" key="1">
    <source>
        <dbReference type="HAMAP-Rule" id="MF_01006"/>
    </source>
</evidence>
<proteinExistence type="inferred from homology"/>
<sequence>MSDIHSLLVAAILGVVEGLTEFLPVSSTGHMIIVGHLLGFEGDTAETFEVVIQLGSILAVVVMFWRRLFGLIGIHFGKQPHEGTGKGRLTLGHIVLGMIPAVVLGLVFHDTIKSLFNPVNVMYALVVGGLLLIAAECLKPKEPRAPGLDDMTYRQAFMIGCFQCLALWPGFSRSGATISGGMLMGVSRYAASEFSFLLAVPMMMGATALDLYKSWSFLTVEDIPMFAVGFVTAFIVALIAIKTFLQLIKRISFIPFAIYRFIVAAAVYVVFF</sequence>
<comment type="function">
    <text evidence="1">Catalyzes the dephosphorylation of undecaprenyl diphosphate (UPP). Confers resistance to bacitracin.</text>
</comment>
<comment type="catalytic activity">
    <reaction evidence="1">
        <text>di-trans,octa-cis-undecaprenyl diphosphate + H2O = di-trans,octa-cis-undecaprenyl phosphate + phosphate + H(+)</text>
        <dbReference type="Rhea" id="RHEA:28094"/>
        <dbReference type="ChEBI" id="CHEBI:15377"/>
        <dbReference type="ChEBI" id="CHEBI:15378"/>
        <dbReference type="ChEBI" id="CHEBI:43474"/>
        <dbReference type="ChEBI" id="CHEBI:58405"/>
        <dbReference type="ChEBI" id="CHEBI:60392"/>
        <dbReference type="EC" id="3.6.1.27"/>
    </reaction>
</comment>
<comment type="subcellular location">
    <subcellularLocation>
        <location evidence="1">Cell inner membrane</location>
        <topology evidence="1">Multi-pass membrane protein</topology>
    </subcellularLocation>
</comment>
<comment type="miscellaneous">
    <text>Bacitracin is thought to be involved in the inhibition of peptidoglycan synthesis by sequestering undecaprenyl diphosphate, thereby reducing the pool of lipid carrier available.</text>
</comment>
<comment type="similarity">
    <text evidence="1">Belongs to the UppP family.</text>
</comment>
<organism>
    <name type="scientific">Citrobacter koseri (strain ATCC BAA-895 / CDC 4225-83 / SGSC4696)</name>
    <dbReference type="NCBI Taxonomy" id="290338"/>
    <lineage>
        <taxon>Bacteria</taxon>
        <taxon>Pseudomonadati</taxon>
        <taxon>Pseudomonadota</taxon>
        <taxon>Gammaproteobacteria</taxon>
        <taxon>Enterobacterales</taxon>
        <taxon>Enterobacteriaceae</taxon>
        <taxon>Citrobacter</taxon>
    </lineage>
</organism>
<protein>
    <recommendedName>
        <fullName evidence="1">Undecaprenyl-diphosphatase</fullName>
        <ecNumber evidence="1">3.6.1.27</ecNumber>
    </recommendedName>
    <alternativeName>
        <fullName evidence="1">Bacitracin resistance protein</fullName>
    </alternativeName>
    <alternativeName>
        <fullName evidence="1">Undecaprenyl pyrophosphate phosphatase</fullName>
    </alternativeName>
</protein>
<feature type="chain" id="PRO_1000062794" description="Undecaprenyl-diphosphatase">
    <location>
        <begin position="1"/>
        <end position="272"/>
    </location>
</feature>
<feature type="transmembrane region" description="Helical" evidence="1">
    <location>
        <begin position="4"/>
        <end position="24"/>
    </location>
</feature>
<feature type="transmembrane region" description="Helical" evidence="1">
    <location>
        <begin position="45"/>
        <end position="65"/>
    </location>
</feature>
<feature type="transmembrane region" description="Helical" evidence="1">
    <location>
        <begin position="89"/>
        <end position="109"/>
    </location>
</feature>
<feature type="transmembrane region" description="Helical" evidence="1">
    <location>
        <begin position="115"/>
        <end position="135"/>
    </location>
</feature>
<feature type="transmembrane region" description="Helical" evidence="1">
    <location>
        <begin position="152"/>
        <end position="174"/>
    </location>
</feature>
<feature type="transmembrane region" description="Helical" evidence="1">
    <location>
        <begin position="189"/>
        <end position="209"/>
    </location>
</feature>
<feature type="transmembrane region" description="Helical" evidence="1">
    <location>
        <begin position="225"/>
        <end position="245"/>
    </location>
</feature>
<feature type="transmembrane region" description="Helical" evidence="1">
    <location>
        <begin position="251"/>
        <end position="271"/>
    </location>
</feature>
<gene>
    <name evidence="1" type="primary">uppP</name>
    <name type="ordered locus">CKO_04447</name>
</gene>
<dbReference type="EC" id="3.6.1.27" evidence="1"/>
<dbReference type="EMBL" id="CP000822">
    <property type="protein sequence ID" value="ABV15503.1"/>
    <property type="molecule type" value="Genomic_DNA"/>
</dbReference>
<dbReference type="SMR" id="A8APU0"/>
<dbReference type="STRING" id="290338.CKO_04447"/>
<dbReference type="GeneID" id="45138016"/>
<dbReference type="KEGG" id="cko:CKO_04447"/>
<dbReference type="HOGENOM" id="CLU_060296_2_0_6"/>
<dbReference type="OrthoDB" id="9808289at2"/>
<dbReference type="Proteomes" id="UP000008148">
    <property type="component" value="Chromosome"/>
</dbReference>
<dbReference type="GO" id="GO:0005886">
    <property type="term" value="C:plasma membrane"/>
    <property type="evidence" value="ECO:0007669"/>
    <property type="project" value="UniProtKB-SubCell"/>
</dbReference>
<dbReference type="GO" id="GO:0050380">
    <property type="term" value="F:undecaprenyl-diphosphatase activity"/>
    <property type="evidence" value="ECO:0007669"/>
    <property type="project" value="UniProtKB-UniRule"/>
</dbReference>
<dbReference type="GO" id="GO:0071555">
    <property type="term" value="P:cell wall organization"/>
    <property type="evidence" value="ECO:0007669"/>
    <property type="project" value="UniProtKB-KW"/>
</dbReference>
<dbReference type="GO" id="GO:0009252">
    <property type="term" value="P:peptidoglycan biosynthetic process"/>
    <property type="evidence" value="ECO:0007669"/>
    <property type="project" value="UniProtKB-KW"/>
</dbReference>
<dbReference type="GO" id="GO:0008360">
    <property type="term" value="P:regulation of cell shape"/>
    <property type="evidence" value="ECO:0007669"/>
    <property type="project" value="UniProtKB-KW"/>
</dbReference>
<dbReference type="GO" id="GO:0046677">
    <property type="term" value="P:response to antibiotic"/>
    <property type="evidence" value="ECO:0007669"/>
    <property type="project" value="UniProtKB-UniRule"/>
</dbReference>
<dbReference type="HAMAP" id="MF_01006">
    <property type="entry name" value="Undec_diphosphatase"/>
    <property type="match status" value="1"/>
</dbReference>
<dbReference type="InterPro" id="IPR003824">
    <property type="entry name" value="UppP"/>
</dbReference>
<dbReference type="NCBIfam" id="NF001388">
    <property type="entry name" value="PRK00281.1-1"/>
    <property type="match status" value="1"/>
</dbReference>
<dbReference type="NCBIfam" id="NF001389">
    <property type="entry name" value="PRK00281.1-2"/>
    <property type="match status" value="1"/>
</dbReference>
<dbReference type="NCBIfam" id="NF001390">
    <property type="entry name" value="PRK00281.1-4"/>
    <property type="match status" value="1"/>
</dbReference>
<dbReference type="NCBIfam" id="TIGR00753">
    <property type="entry name" value="undec_PP_bacA"/>
    <property type="match status" value="1"/>
</dbReference>
<dbReference type="PANTHER" id="PTHR30622">
    <property type="entry name" value="UNDECAPRENYL-DIPHOSPHATASE"/>
    <property type="match status" value="1"/>
</dbReference>
<dbReference type="PANTHER" id="PTHR30622:SF3">
    <property type="entry name" value="UNDECAPRENYL-DIPHOSPHATASE"/>
    <property type="match status" value="1"/>
</dbReference>
<dbReference type="Pfam" id="PF02673">
    <property type="entry name" value="BacA"/>
    <property type="match status" value="1"/>
</dbReference>
<reference key="1">
    <citation type="submission" date="2007-08" db="EMBL/GenBank/DDBJ databases">
        <authorList>
            <consortium name="The Citrobacter koseri Genome Sequencing Project"/>
            <person name="McClelland M."/>
            <person name="Sanderson E.K."/>
            <person name="Porwollik S."/>
            <person name="Spieth J."/>
            <person name="Clifton W.S."/>
            <person name="Latreille P."/>
            <person name="Courtney L."/>
            <person name="Wang C."/>
            <person name="Pepin K."/>
            <person name="Bhonagiri V."/>
            <person name="Nash W."/>
            <person name="Johnson M."/>
            <person name="Thiruvilangam P."/>
            <person name="Wilson R."/>
        </authorList>
    </citation>
    <scope>NUCLEOTIDE SEQUENCE [LARGE SCALE GENOMIC DNA]</scope>
    <source>
        <strain>ATCC BAA-895 / CDC 4225-83 / SGSC4696</strain>
    </source>
</reference>